<reference key="1">
    <citation type="journal article" date="2000" name="Proc. Natl. Acad. Sci. U.S.A.">
        <title>Genome sequence of Halobacterium species NRC-1.</title>
        <authorList>
            <person name="Ng W.V."/>
            <person name="Kennedy S.P."/>
            <person name="Mahairas G.G."/>
            <person name="Berquist B."/>
            <person name="Pan M."/>
            <person name="Shukla H.D."/>
            <person name="Lasky S.R."/>
            <person name="Baliga N.S."/>
            <person name="Thorsson V."/>
            <person name="Sbrogna J."/>
            <person name="Swartzell S."/>
            <person name="Weir D."/>
            <person name="Hall J."/>
            <person name="Dahl T.A."/>
            <person name="Welti R."/>
            <person name="Goo Y.A."/>
            <person name="Leithauser B."/>
            <person name="Keller K."/>
            <person name="Cruz R."/>
            <person name="Danson M.J."/>
            <person name="Hough D.W."/>
            <person name="Maddocks D.G."/>
            <person name="Jablonski P.E."/>
            <person name="Krebs M.P."/>
            <person name="Angevine C.M."/>
            <person name="Dale H."/>
            <person name="Isenbarger T.A."/>
            <person name="Peck R.F."/>
            <person name="Pohlschroder M."/>
            <person name="Spudich J.L."/>
            <person name="Jung K.-H."/>
            <person name="Alam M."/>
            <person name="Freitas T."/>
            <person name="Hou S."/>
            <person name="Daniels C.J."/>
            <person name="Dennis P.P."/>
            <person name="Omer A.D."/>
            <person name="Ebhardt H."/>
            <person name="Lowe T.M."/>
            <person name="Liang P."/>
            <person name="Riley M."/>
            <person name="Hood L."/>
            <person name="DasSarma S."/>
        </authorList>
    </citation>
    <scope>NUCLEOTIDE SEQUENCE [LARGE SCALE GENOMIC DNA]</scope>
    <source>
        <strain>ATCC 700922 / JCM 11081 / NRC-1</strain>
    </source>
</reference>
<reference key="2">
    <citation type="journal article" date="1984" name="Can. J. Biochem. Cell Biol.">
        <title>Purification, properties, and N-terminal amino acid sequence of certain 50S ribosomal subunit proteins from the archaebacterium Halobacterium cutirubrum.</title>
        <authorList>
            <person name="Matheson A.T."/>
            <person name="Yaguchi M."/>
            <person name="Christensen P."/>
            <person name="Rollin C.F."/>
            <person name="Hasnain S."/>
        </authorList>
    </citation>
    <scope>PROTEIN SEQUENCE OF 2-37</scope>
</reference>
<accession>Q9HPB8</accession>
<accession>P05968</accession>
<keyword id="KW-0903">Direct protein sequencing</keyword>
<keyword id="KW-1185">Reference proteome</keyword>
<keyword id="KW-0687">Ribonucleoprotein</keyword>
<keyword id="KW-0689">Ribosomal protein</keyword>
<keyword id="KW-0694">RNA-binding</keyword>
<keyword id="KW-0699">rRNA-binding</keyword>
<proteinExistence type="evidence at protein level"/>
<comment type="function">
    <text evidence="1">This protein binds to the 23S rRNA, and is important in its secondary structure. It is located near the subunit interface in the base of the L7/L12 stalk, and near the tRNA binding site of the peptidyltransferase center.</text>
</comment>
<comment type="subunit">
    <text evidence="1">Part of the 50S ribosomal subunit.</text>
</comment>
<comment type="similarity">
    <text evidence="1">Belongs to the universal ribosomal protein uL6 family.</text>
</comment>
<sequence>MARVEIEIPDDVTAEVDHLDLTVEGPEGSVTRRLWYPDVDVSVEDDAVVVASEVDDAKTDSTVGTFESHVANMFHGVSEGWEYKLEVHYSHFPMQVDVEGEEVVIQNFLGEKAARRTQIRGDTDVVVDDEEVTLSGPSIEDVGQTAADIEQLTRVTDKDTRVFQDGVYIVEKPAKGGA</sequence>
<feature type="initiator methionine" description="Removed" evidence="2">
    <location>
        <position position="1"/>
    </location>
</feature>
<feature type="chain" id="PRO_0000131084" description="Large ribosomal subunit protein uL6">
    <location>
        <begin position="2"/>
        <end position="178"/>
    </location>
</feature>
<feature type="sequence conflict" description="In Ref. 2; AA sequence." evidence="3" ref="2">
    <original>Y</original>
    <variation>Q</variation>
    <location>
        <position position="36"/>
    </location>
</feature>
<organism>
    <name type="scientific">Halobacterium salinarum (strain ATCC 700922 / JCM 11081 / NRC-1)</name>
    <name type="common">Halobacterium halobium</name>
    <dbReference type="NCBI Taxonomy" id="64091"/>
    <lineage>
        <taxon>Archaea</taxon>
        <taxon>Methanobacteriati</taxon>
        <taxon>Methanobacteriota</taxon>
        <taxon>Stenosarchaea group</taxon>
        <taxon>Halobacteria</taxon>
        <taxon>Halobacteriales</taxon>
        <taxon>Halobacteriaceae</taxon>
        <taxon>Halobacterium</taxon>
        <taxon>Halobacterium salinarum NRC-34001</taxon>
    </lineage>
</organism>
<name>RL6_HALSA</name>
<gene>
    <name evidence="1" type="primary">rpl6</name>
    <name type="ordered locus">VNG_1709G</name>
</gene>
<evidence type="ECO:0000255" key="1">
    <source>
        <dbReference type="HAMAP-Rule" id="MF_01365"/>
    </source>
</evidence>
<evidence type="ECO:0000269" key="2">
    <source>
    </source>
</evidence>
<evidence type="ECO:0000305" key="3"/>
<protein>
    <recommendedName>
        <fullName evidence="1">Large ribosomal subunit protein uL6</fullName>
    </recommendedName>
    <alternativeName>
        <fullName evidence="3">50S ribosomal protein L6</fullName>
    </alternativeName>
    <alternativeName>
        <fullName>HL10</fullName>
    </alternativeName>
</protein>
<dbReference type="EMBL" id="AE004437">
    <property type="protein sequence ID" value="AAG19952.1"/>
    <property type="molecule type" value="Genomic_DNA"/>
</dbReference>
<dbReference type="PIR" id="D84323">
    <property type="entry name" value="D84323"/>
</dbReference>
<dbReference type="PIR" id="S08552">
    <property type="entry name" value="S08552"/>
</dbReference>
<dbReference type="RefSeq" id="WP_010903250.1">
    <property type="nucleotide sequence ID" value="NC_002607.1"/>
</dbReference>
<dbReference type="SMR" id="Q9HPB8"/>
<dbReference type="FunCoup" id="Q9HPB8">
    <property type="interactions" value="127"/>
</dbReference>
<dbReference type="STRING" id="64091.VNG_1709G"/>
<dbReference type="PaxDb" id="64091-VNG_1709G"/>
<dbReference type="KEGG" id="hal:VNG_1709G"/>
<dbReference type="PATRIC" id="fig|64091.14.peg.1304"/>
<dbReference type="HOGENOM" id="CLU_065464_0_0_2"/>
<dbReference type="InParanoid" id="Q9HPB8"/>
<dbReference type="OrthoDB" id="7144at2157"/>
<dbReference type="PhylomeDB" id="Q9HPB8"/>
<dbReference type="Proteomes" id="UP000000554">
    <property type="component" value="Chromosome"/>
</dbReference>
<dbReference type="GO" id="GO:0022625">
    <property type="term" value="C:cytosolic large ribosomal subunit"/>
    <property type="evidence" value="ECO:0000318"/>
    <property type="project" value="GO_Central"/>
</dbReference>
<dbReference type="GO" id="GO:0019843">
    <property type="term" value="F:rRNA binding"/>
    <property type="evidence" value="ECO:0007669"/>
    <property type="project" value="UniProtKB-UniRule"/>
</dbReference>
<dbReference type="GO" id="GO:0003735">
    <property type="term" value="F:structural constituent of ribosome"/>
    <property type="evidence" value="ECO:0000318"/>
    <property type="project" value="GO_Central"/>
</dbReference>
<dbReference type="GO" id="GO:0002181">
    <property type="term" value="P:cytoplasmic translation"/>
    <property type="evidence" value="ECO:0000318"/>
    <property type="project" value="GO_Central"/>
</dbReference>
<dbReference type="FunFam" id="3.90.930.12:FF:000008">
    <property type="entry name" value="50S ribosomal protein L6"/>
    <property type="match status" value="1"/>
</dbReference>
<dbReference type="Gene3D" id="3.90.930.12">
    <property type="entry name" value="Ribosomal protein L6, alpha-beta domain"/>
    <property type="match status" value="2"/>
</dbReference>
<dbReference type="HAMAP" id="MF_01365_A">
    <property type="entry name" value="Ribosomal_uL6_A"/>
    <property type="match status" value="1"/>
</dbReference>
<dbReference type="InterPro" id="IPR000702">
    <property type="entry name" value="Ribosomal_uL6-like"/>
</dbReference>
<dbReference type="InterPro" id="IPR036789">
    <property type="entry name" value="Ribosomal_uL6-like_a/b-dom_sf"/>
</dbReference>
<dbReference type="InterPro" id="IPR020040">
    <property type="entry name" value="Ribosomal_uL6_a/b-dom"/>
</dbReference>
<dbReference type="InterPro" id="IPR019907">
    <property type="entry name" value="Ribosomal_uL6_arc"/>
</dbReference>
<dbReference type="InterPro" id="IPR002359">
    <property type="entry name" value="Ribosomal_uL6_CS2"/>
</dbReference>
<dbReference type="NCBIfam" id="NF004037">
    <property type="entry name" value="PRK05518.1"/>
    <property type="match status" value="1"/>
</dbReference>
<dbReference type="NCBIfam" id="TIGR03653">
    <property type="entry name" value="uL6_arch"/>
    <property type="match status" value="1"/>
</dbReference>
<dbReference type="PANTHER" id="PTHR11655:SF16">
    <property type="entry name" value="60S RIBOSOMAL PROTEIN L9"/>
    <property type="match status" value="1"/>
</dbReference>
<dbReference type="PANTHER" id="PTHR11655">
    <property type="entry name" value="60S/50S RIBOSOMAL PROTEIN L6/L9"/>
    <property type="match status" value="1"/>
</dbReference>
<dbReference type="Pfam" id="PF00347">
    <property type="entry name" value="Ribosomal_L6"/>
    <property type="match status" value="2"/>
</dbReference>
<dbReference type="PIRSF" id="PIRSF002162">
    <property type="entry name" value="Ribosomal_L6"/>
    <property type="match status" value="1"/>
</dbReference>
<dbReference type="SUPFAM" id="SSF56053">
    <property type="entry name" value="Ribosomal protein L6"/>
    <property type="match status" value="2"/>
</dbReference>
<dbReference type="PROSITE" id="PS00700">
    <property type="entry name" value="RIBOSOMAL_L6_2"/>
    <property type="match status" value="1"/>
</dbReference>